<geneLocation type="plasmid">
    <name>pTP10</name>
</geneLocation>
<dbReference type="EC" id="3.6.1.27"/>
<dbReference type="EMBL" id="AF024666">
    <property type="protein sequence ID" value="AAG03365.1"/>
    <property type="molecule type" value="Genomic_DNA"/>
</dbReference>
<dbReference type="RefSeq" id="NP_862231.1">
    <property type="nucleotide sequence ID" value="NC_004939.1"/>
</dbReference>
<dbReference type="SMR" id="Q9FB58"/>
<dbReference type="GO" id="GO:0005886">
    <property type="term" value="C:plasma membrane"/>
    <property type="evidence" value="ECO:0007669"/>
    <property type="project" value="UniProtKB-SubCell"/>
</dbReference>
<dbReference type="GO" id="GO:0050380">
    <property type="term" value="F:undecaprenyl-diphosphatase activity"/>
    <property type="evidence" value="ECO:0007669"/>
    <property type="project" value="UniProtKB-UniRule"/>
</dbReference>
<dbReference type="GO" id="GO:0071555">
    <property type="term" value="P:cell wall organization"/>
    <property type="evidence" value="ECO:0007669"/>
    <property type="project" value="UniProtKB-KW"/>
</dbReference>
<dbReference type="GO" id="GO:0009252">
    <property type="term" value="P:peptidoglycan biosynthetic process"/>
    <property type="evidence" value="ECO:0007669"/>
    <property type="project" value="UniProtKB-KW"/>
</dbReference>
<dbReference type="GO" id="GO:0008360">
    <property type="term" value="P:regulation of cell shape"/>
    <property type="evidence" value="ECO:0007669"/>
    <property type="project" value="UniProtKB-KW"/>
</dbReference>
<dbReference type="GO" id="GO:0046677">
    <property type="term" value="P:response to antibiotic"/>
    <property type="evidence" value="ECO:0007669"/>
    <property type="project" value="UniProtKB-UniRule"/>
</dbReference>
<dbReference type="HAMAP" id="MF_01006">
    <property type="entry name" value="Undec_diphosphatase"/>
    <property type="match status" value="1"/>
</dbReference>
<dbReference type="InterPro" id="IPR003824">
    <property type="entry name" value="UppP"/>
</dbReference>
<dbReference type="NCBIfam" id="NF001392">
    <property type="entry name" value="PRK00281.2-1"/>
    <property type="match status" value="1"/>
</dbReference>
<dbReference type="NCBIfam" id="TIGR00753">
    <property type="entry name" value="undec_PP_bacA"/>
    <property type="match status" value="1"/>
</dbReference>
<dbReference type="PANTHER" id="PTHR30622">
    <property type="entry name" value="UNDECAPRENYL-DIPHOSPHATASE"/>
    <property type="match status" value="1"/>
</dbReference>
<dbReference type="PANTHER" id="PTHR30622:SF4">
    <property type="entry name" value="UNDECAPRENYL-DIPHOSPHATASE"/>
    <property type="match status" value="1"/>
</dbReference>
<dbReference type="Pfam" id="PF02673">
    <property type="entry name" value="BacA"/>
    <property type="match status" value="1"/>
</dbReference>
<gene>
    <name type="primary">uppP</name>
    <name type="synonym">bacA</name>
    <name type="synonym">upk</name>
</gene>
<comment type="function">
    <text evidence="1">Catalyzes the dephosphorylation of undecaprenyl diphosphate (UPP). Confers resistance to bacitracin (By similarity).</text>
</comment>
<comment type="catalytic activity">
    <reaction>
        <text>di-trans,octa-cis-undecaprenyl diphosphate + H2O = di-trans,octa-cis-undecaprenyl phosphate + phosphate + H(+)</text>
        <dbReference type="Rhea" id="RHEA:28094"/>
        <dbReference type="ChEBI" id="CHEBI:15377"/>
        <dbReference type="ChEBI" id="CHEBI:15378"/>
        <dbReference type="ChEBI" id="CHEBI:43474"/>
        <dbReference type="ChEBI" id="CHEBI:58405"/>
        <dbReference type="ChEBI" id="CHEBI:60392"/>
        <dbReference type="EC" id="3.6.1.27"/>
    </reaction>
</comment>
<comment type="subcellular location">
    <subcellularLocation>
        <location evidence="1">Cell membrane</location>
        <topology evidence="1">Multi-pass membrane protein</topology>
    </subcellularLocation>
</comment>
<comment type="miscellaneous">
    <text>Bacitracin is thought to be involved in the inhibition of peptidoglycan synthesis by sequestering undecaprenyl diphosphate, thereby reducing the pool of lipid carrier available.</text>
</comment>
<comment type="similarity">
    <text evidence="3">Belongs to the UppP family.</text>
</comment>
<keyword id="KW-0046">Antibiotic resistance</keyword>
<keyword id="KW-1003">Cell membrane</keyword>
<keyword id="KW-0133">Cell shape</keyword>
<keyword id="KW-0961">Cell wall biogenesis/degradation</keyword>
<keyword id="KW-0378">Hydrolase</keyword>
<keyword id="KW-0472">Membrane</keyword>
<keyword id="KW-0573">Peptidoglycan synthesis</keyword>
<keyword id="KW-0614">Plasmid</keyword>
<keyword id="KW-0812">Transmembrane</keyword>
<keyword id="KW-1133">Transmembrane helix</keyword>
<protein>
    <recommendedName>
        <fullName>Undecaprenyl-diphosphatase</fullName>
        <ecNumber>3.6.1.27</ecNumber>
    </recommendedName>
    <alternativeName>
        <fullName>Bacitracin resistance protein</fullName>
    </alternativeName>
    <alternativeName>
        <fullName>Undecaprenyl pyrophosphate phosphatase</fullName>
    </alternativeName>
</protein>
<proteinExistence type="inferred from homology"/>
<name>UPPP_CORST</name>
<feature type="chain" id="PRO_0000151141" description="Undecaprenyl-diphosphatase">
    <location>
        <begin position="1"/>
        <end position="281"/>
    </location>
</feature>
<feature type="transmembrane region" description="Helical" evidence="2">
    <location>
        <begin position="12"/>
        <end position="32"/>
    </location>
</feature>
<feature type="transmembrane region" description="Helical" evidence="2">
    <location>
        <begin position="50"/>
        <end position="70"/>
    </location>
</feature>
<feature type="transmembrane region" description="Helical" evidence="2">
    <location>
        <begin position="99"/>
        <end position="119"/>
    </location>
</feature>
<feature type="transmembrane region" description="Helical" evidence="2">
    <location>
        <begin position="123"/>
        <end position="143"/>
    </location>
</feature>
<feature type="transmembrane region" description="Helical" evidence="2">
    <location>
        <begin position="156"/>
        <end position="176"/>
    </location>
</feature>
<feature type="transmembrane region" description="Helical" evidence="2">
    <location>
        <begin position="199"/>
        <end position="219"/>
    </location>
</feature>
<feature type="transmembrane region" description="Helical" evidence="2">
    <location>
        <begin position="231"/>
        <end position="251"/>
    </location>
</feature>
<feature type="transmembrane region" description="Helical" evidence="2">
    <location>
        <begin position="260"/>
        <end position="280"/>
    </location>
</feature>
<accession>Q9FB58</accession>
<sequence>MSFAMTDPATTMSWVQVIVLSIVQGLTEFLPVSSSGHLRIVSQLFWGEDAGASFTAVIQLGTELAVLVFFAKDIWRILTAWFAGLADKSKRNFDYRMGWMVIAGTIPVGLAGVLLKDLIRENFRNLWITATVLILFSLVFILAERRGKKTRGFEELTMKDAVVMGLWQCLALIPGVSRSGGTISGGLFLNLDREVATRFSFLLAIPAVLASGLFSLPDAFDPQAGQAASGLQLLVGSGIGFVVGYISIAWLLKFVSNHSFAWFAAYRIPLGLLVMALLGLA</sequence>
<organism>
    <name type="scientific">Corynebacterium striatum</name>
    <dbReference type="NCBI Taxonomy" id="43770"/>
    <lineage>
        <taxon>Bacteria</taxon>
        <taxon>Bacillati</taxon>
        <taxon>Actinomycetota</taxon>
        <taxon>Actinomycetes</taxon>
        <taxon>Mycobacteriales</taxon>
        <taxon>Corynebacteriaceae</taxon>
        <taxon>Corynebacterium</taxon>
    </lineage>
</organism>
<evidence type="ECO:0000250" key="1"/>
<evidence type="ECO:0000255" key="2"/>
<evidence type="ECO:0000305" key="3"/>
<reference key="1">
    <citation type="journal article" date="2000" name="Mol. Gen. Genet.">
        <title>The 51,409-bp R-plasmid pTP10 from the multiresistant clinical isolate Corynebacterium striatum M82B is composed of DNA segments initially identified in soil bacteria and in plant, animal, and human pathogens.</title>
        <authorList>
            <person name="Tauch A."/>
            <person name="Krieft S."/>
            <person name="Kalinowski J."/>
            <person name="Puehler A."/>
        </authorList>
    </citation>
    <scope>NUCLEOTIDE SEQUENCE [GENOMIC DNA]</scope>
    <source>
        <strain>M82B</strain>
    </source>
</reference>